<feature type="chain" id="PRO_1000074004" description="Octanoyltransferase">
    <location>
        <begin position="1"/>
        <end position="232"/>
    </location>
</feature>
<feature type="domain" description="BPL/LPL catalytic" evidence="2">
    <location>
        <begin position="40"/>
        <end position="226"/>
    </location>
</feature>
<feature type="active site" description="Acyl-thioester intermediate" evidence="1">
    <location>
        <position position="188"/>
    </location>
</feature>
<feature type="binding site" evidence="1">
    <location>
        <begin position="79"/>
        <end position="86"/>
    </location>
    <ligand>
        <name>substrate</name>
    </ligand>
</feature>
<feature type="binding site" evidence="1">
    <location>
        <begin position="157"/>
        <end position="159"/>
    </location>
    <ligand>
        <name>substrate</name>
    </ligand>
</feature>
<feature type="binding site" evidence="1">
    <location>
        <begin position="170"/>
        <end position="172"/>
    </location>
    <ligand>
        <name>substrate</name>
    </ligand>
</feature>
<feature type="site" description="Lowers pKa of active site Cys" evidence="1">
    <location>
        <position position="154"/>
    </location>
</feature>
<protein>
    <recommendedName>
        <fullName evidence="1">Octanoyltransferase</fullName>
        <ecNumber evidence="1">2.3.1.181</ecNumber>
    </recommendedName>
    <alternativeName>
        <fullName evidence="1">Lipoate-protein ligase B</fullName>
    </alternativeName>
    <alternativeName>
        <fullName evidence="1">Lipoyl/octanoyl transferase</fullName>
    </alternativeName>
    <alternativeName>
        <fullName evidence="1">Octanoyl-[acyl-carrier-protein]-protein N-octanoyltransferase</fullName>
    </alternativeName>
</protein>
<reference key="1">
    <citation type="journal article" date="2009" name="BMC Genomics">
        <title>Complete genome sequence of the sugarcane nitrogen-fixing endophyte Gluconacetobacter diazotrophicus Pal5.</title>
        <authorList>
            <person name="Bertalan M."/>
            <person name="Albano R."/>
            <person name="de Padua V."/>
            <person name="Rouws L."/>
            <person name="Rojas C."/>
            <person name="Hemerly A."/>
            <person name="Teixeira K."/>
            <person name="Schwab S."/>
            <person name="Araujo J."/>
            <person name="Oliveira A."/>
            <person name="Franca L."/>
            <person name="Magalhaes V."/>
            <person name="Alqueres S."/>
            <person name="Cardoso A."/>
            <person name="Almeida W."/>
            <person name="Loureiro M.M."/>
            <person name="Nogueira E."/>
            <person name="Cidade D."/>
            <person name="Oliveira D."/>
            <person name="Simao T."/>
            <person name="Macedo J."/>
            <person name="Valadao A."/>
            <person name="Dreschsel M."/>
            <person name="Freitas F."/>
            <person name="Vidal M."/>
            <person name="Guedes H."/>
            <person name="Rodrigues E."/>
            <person name="Meneses C."/>
            <person name="Brioso P."/>
            <person name="Pozzer L."/>
            <person name="Figueiredo D."/>
            <person name="Montano H."/>
            <person name="Junior J."/>
            <person name="de Souza Filho G."/>
            <person name="Martin Quintana Flores V."/>
            <person name="Ferreira B."/>
            <person name="Branco A."/>
            <person name="Gonzalez P."/>
            <person name="Guillobel H."/>
            <person name="Lemos M."/>
            <person name="Seibel L."/>
            <person name="Macedo J."/>
            <person name="Alves-Ferreira M."/>
            <person name="Sachetto-Martins G."/>
            <person name="Coelho A."/>
            <person name="Santos E."/>
            <person name="Amaral G."/>
            <person name="Neves A."/>
            <person name="Pacheco A.B."/>
            <person name="Carvalho D."/>
            <person name="Lery L."/>
            <person name="Bisch P."/>
            <person name="Rossle S.C."/>
            <person name="Urmenyi T."/>
            <person name="Rael Pereira A."/>
            <person name="Silva R."/>
            <person name="Rondinelli E."/>
            <person name="von Kruger W."/>
            <person name="Martins O."/>
            <person name="Baldani J.I."/>
            <person name="Ferreira P.C."/>
        </authorList>
    </citation>
    <scope>NUCLEOTIDE SEQUENCE [LARGE SCALE GENOMIC DNA]</scope>
    <source>
        <strain>ATCC 49037 / DSM 5601 / CCUG 37298 / CIP 103539 / LMG 7603 / PAl5</strain>
    </source>
</reference>
<reference key="2">
    <citation type="journal article" date="2010" name="Stand. Genomic Sci.">
        <title>Two genome sequences of the same bacterial strain, Gluconacetobacter diazotrophicus PAl 5, suggest a new standard in genome sequence submission.</title>
        <authorList>
            <person name="Giongo A."/>
            <person name="Tyler H.L."/>
            <person name="Zipperer U.N."/>
            <person name="Triplett E.W."/>
        </authorList>
    </citation>
    <scope>NUCLEOTIDE SEQUENCE [LARGE SCALE GENOMIC DNA]</scope>
    <source>
        <strain>ATCC 49037 / DSM 5601 / CCUG 37298 / CIP 103539 / LMG 7603 / PAl5</strain>
    </source>
</reference>
<name>LIPB_GLUDA</name>
<organism>
    <name type="scientific">Gluconacetobacter diazotrophicus (strain ATCC 49037 / DSM 5601 / CCUG 37298 / CIP 103539 / LMG 7603 / PAl5)</name>
    <dbReference type="NCBI Taxonomy" id="272568"/>
    <lineage>
        <taxon>Bacteria</taxon>
        <taxon>Pseudomonadati</taxon>
        <taxon>Pseudomonadota</taxon>
        <taxon>Alphaproteobacteria</taxon>
        <taxon>Acetobacterales</taxon>
        <taxon>Acetobacteraceae</taxon>
        <taxon>Gluconacetobacter</taxon>
    </lineage>
</organism>
<evidence type="ECO:0000255" key="1">
    <source>
        <dbReference type="HAMAP-Rule" id="MF_00013"/>
    </source>
</evidence>
<evidence type="ECO:0000255" key="2">
    <source>
        <dbReference type="PROSITE-ProRule" id="PRU01067"/>
    </source>
</evidence>
<comment type="function">
    <text evidence="1">Catalyzes the transfer of endogenously produced octanoic acid from octanoyl-acyl-carrier-protein onto the lipoyl domains of lipoate-dependent enzymes. Lipoyl-ACP can also act as a substrate although octanoyl-ACP is likely to be the physiological substrate.</text>
</comment>
<comment type="catalytic activity">
    <reaction evidence="1">
        <text>octanoyl-[ACP] + L-lysyl-[protein] = N(6)-octanoyl-L-lysyl-[protein] + holo-[ACP] + H(+)</text>
        <dbReference type="Rhea" id="RHEA:17665"/>
        <dbReference type="Rhea" id="RHEA-COMP:9636"/>
        <dbReference type="Rhea" id="RHEA-COMP:9685"/>
        <dbReference type="Rhea" id="RHEA-COMP:9752"/>
        <dbReference type="Rhea" id="RHEA-COMP:9928"/>
        <dbReference type="ChEBI" id="CHEBI:15378"/>
        <dbReference type="ChEBI" id="CHEBI:29969"/>
        <dbReference type="ChEBI" id="CHEBI:64479"/>
        <dbReference type="ChEBI" id="CHEBI:78463"/>
        <dbReference type="ChEBI" id="CHEBI:78809"/>
        <dbReference type="EC" id="2.3.1.181"/>
    </reaction>
</comment>
<comment type="pathway">
    <text evidence="1">Protein modification; protein lipoylation via endogenous pathway; protein N(6)-(lipoyl)lysine from octanoyl-[acyl-carrier-protein]: step 1/2.</text>
</comment>
<comment type="subcellular location">
    <subcellularLocation>
        <location evidence="1">Cytoplasm</location>
    </subcellularLocation>
</comment>
<comment type="miscellaneous">
    <text evidence="1">In the reaction, the free carboxyl group of octanoic acid is attached via an amide linkage to the epsilon-amino group of a specific lysine residue of lipoyl domains of lipoate-dependent enzymes.</text>
</comment>
<comment type="similarity">
    <text evidence="1">Belongs to the LipB family.</text>
</comment>
<keyword id="KW-0012">Acyltransferase</keyword>
<keyword id="KW-0963">Cytoplasm</keyword>
<keyword id="KW-1185">Reference proteome</keyword>
<keyword id="KW-0808">Transferase</keyword>
<gene>
    <name evidence="1" type="primary">lipB</name>
    <name type="ordered locus">GDI1897</name>
    <name type="ordered locus">Gdia_0120</name>
</gene>
<proteinExistence type="inferred from homology"/>
<dbReference type="EC" id="2.3.1.181" evidence="1"/>
<dbReference type="EMBL" id="AM889285">
    <property type="protein sequence ID" value="CAP55840.1"/>
    <property type="molecule type" value="Genomic_DNA"/>
</dbReference>
<dbReference type="EMBL" id="CP001189">
    <property type="protein sequence ID" value="ACI49920.1"/>
    <property type="molecule type" value="Genomic_DNA"/>
</dbReference>
<dbReference type="RefSeq" id="WP_012225500.1">
    <property type="nucleotide sequence ID" value="NC_010125.1"/>
</dbReference>
<dbReference type="SMR" id="A9HJ12"/>
<dbReference type="STRING" id="272568.GDI1897"/>
<dbReference type="KEGG" id="gdi:GDI1897"/>
<dbReference type="KEGG" id="gdj:Gdia_0120"/>
<dbReference type="eggNOG" id="COG0321">
    <property type="taxonomic scope" value="Bacteria"/>
</dbReference>
<dbReference type="HOGENOM" id="CLU_035168_3_0_5"/>
<dbReference type="OrthoDB" id="9787061at2"/>
<dbReference type="UniPathway" id="UPA00538">
    <property type="reaction ID" value="UER00592"/>
</dbReference>
<dbReference type="Proteomes" id="UP000001176">
    <property type="component" value="Chromosome"/>
</dbReference>
<dbReference type="GO" id="GO:0005737">
    <property type="term" value="C:cytoplasm"/>
    <property type="evidence" value="ECO:0007669"/>
    <property type="project" value="UniProtKB-SubCell"/>
</dbReference>
<dbReference type="GO" id="GO:0033819">
    <property type="term" value="F:lipoyl(octanoyl) transferase activity"/>
    <property type="evidence" value="ECO:0007669"/>
    <property type="project" value="UniProtKB-EC"/>
</dbReference>
<dbReference type="GO" id="GO:0036211">
    <property type="term" value="P:protein modification process"/>
    <property type="evidence" value="ECO:0007669"/>
    <property type="project" value="InterPro"/>
</dbReference>
<dbReference type="CDD" id="cd16444">
    <property type="entry name" value="LipB"/>
    <property type="match status" value="1"/>
</dbReference>
<dbReference type="Gene3D" id="3.30.930.10">
    <property type="entry name" value="Bira Bifunctional Protein, Domain 2"/>
    <property type="match status" value="1"/>
</dbReference>
<dbReference type="HAMAP" id="MF_00013">
    <property type="entry name" value="LipB"/>
    <property type="match status" value="1"/>
</dbReference>
<dbReference type="InterPro" id="IPR045864">
    <property type="entry name" value="aa-tRNA-synth_II/BPL/LPL"/>
</dbReference>
<dbReference type="InterPro" id="IPR004143">
    <property type="entry name" value="BPL_LPL_catalytic"/>
</dbReference>
<dbReference type="InterPro" id="IPR000544">
    <property type="entry name" value="Octanoyltransferase"/>
</dbReference>
<dbReference type="InterPro" id="IPR020605">
    <property type="entry name" value="Octanoyltransferase_CS"/>
</dbReference>
<dbReference type="NCBIfam" id="TIGR00214">
    <property type="entry name" value="lipB"/>
    <property type="match status" value="1"/>
</dbReference>
<dbReference type="NCBIfam" id="NF010921">
    <property type="entry name" value="PRK14341.1"/>
    <property type="match status" value="1"/>
</dbReference>
<dbReference type="NCBIfam" id="NF010925">
    <property type="entry name" value="PRK14345.1"/>
    <property type="match status" value="1"/>
</dbReference>
<dbReference type="PANTHER" id="PTHR10993:SF7">
    <property type="entry name" value="LIPOYLTRANSFERASE 2, MITOCHONDRIAL-RELATED"/>
    <property type="match status" value="1"/>
</dbReference>
<dbReference type="PANTHER" id="PTHR10993">
    <property type="entry name" value="OCTANOYLTRANSFERASE"/>
    <property type="match status" value="1"/>
</dbReference>
<dbReference type="Pfam" id="PF21948">
    <property type="entry name" value="LplA-B_cat"/>
    <property type="match status" value="1"/>
</dbReference>
<dbReference type="PIRSF" id="PIRSF016262">
    <property type="entry name" value="LPLase"/>
    <property type="match status" value="1"/>
</dbReference>
<dbReference type="SUPFAM" id="SSF55681">
    <property type="entry name" value="Class II aaRS and biotin synthetases"/>
    <property type="match status" value="1"/>
</dbReference>
<dbReference type="PROSITE" id="PS51733">
    <property type="entry name" value="BPL_LPL_CATALYTIC"/>
    <property type="match status" value="1"/>
</dbReference>
<dbReference type="PROSITE" id="PS01313">
    <property type="entry name" value="LIPB"/>
    <property type="match status" value="1"/>
</dbReference>
<sequence>MHDRRAMTEKTILWNSSPGLVPYPDAIAGMEHQVAGIRDGSAPERVWLLEHPPTFTAGTSARDEDLFNPHHFPTYAAGRGGQWTYHGPGQRVAYVMLDLTAPHGVVPARDLRAYVHTLEEWLIRTLRRFDVTGERRADRIGVWVVDARTGAENKIAALGVRVSRWTCWHGVALNVAPNLDDFGGIVPCGIREHGVTSLHALGHKVSLGDVDEALRATWQDLFGSVPTPIGTA</sequence>
<accession>A9HJ12</accession>
<accession>B5ZJY1</accession>